<gene>
    <name evidence="1" type="primary">rplN</name>
    <name type="ordered locus">CLI_3653</name>
</gene>
<comment type="function">
    <text evidence="1">Binds to 23S rRNA. Forms part of two intersubunit bridges in the 70S ribosome.</text>
</comment>
<comment type="subunit">
    <text evidence="1">Part of the 50S ribosomal subunit. Forms a cluster with proteins L3 and L19. In the 70S ribosome, L14 and L19 interact and together make contacts with the 16S rRNA in bridges B5 and B8.</text>
</comment>
<comment type="similarity">
    <text evidence="1">Belongs to the universal ribosomal protein uL14 family.</text>
</comment>
<protein>
    <recommendedName>
        <fullName evidence="1">Large ribosomal subunit protein uL14</fullName>
    </recommendedName>
    <alternativeName>
        <fullName evidence="2">50S ribosomal protein L14</fullName>
    </alternativeName>
</protein>
<sequence>MIQQQTRLKVADNSGAKEIMCIRVLGGSHRKWGNIGDVIVASVKSATPGGVVKKGEVVKAVIVRSVKGLRRADGSYIKFDENAAVIIKDDKNPKGTRIFGPVARELRDKEFNKILSLAPEVL</sequence>
<keyword id="KW-0687">Ribonucleoprotein</keyword>
<keyword id="KW-0689">Ribosomal protein</keyword>
<keyword id="KW-0694">RNA-binding</keyword>
<keyword id="KW-0699">rRNA-binding</keyword>
<evidence type="ECO:0000255" key="1">
    <source>
        <dbReference type="HAMAP-Rule" id="MF_01367"/>
    </source>
</evidence>
<evidence type="ECO:0000305" key="2"/>
<dbReference type="EMBL" id="CP000728">
    <property type="protein sequence ID" value="ABS42834.1"/>
    <property type="molecule type" value="Genomic_DNA"/>
</dbReference>
<dbReference type="RefSeq" id="WP_003357295.1">
    <property type="nucleotide sequence ID" value="NC_009699.1"/>
</dbReference>
<dbReference type="SMR" id="A7GJ64"/>
<dbReference type="GeneID" id="92940240"/>
<dbReference type="KEGG" id="cbf:CLI_3653"/>
<dbReference type="HOGENOM" id="CLU_095071_2_1_9"/>
<dbReference type="Proteomes" id="UP000002410">
    <property type="component" value="Chromosome"/>
</dbReference>
<dbReference type="GO" id="GO:0022625">
    <property type="term" value="C:cytosolic large ribosomal subunit"/>
    <property type="evidence" value="ECO:0007669"/>
    <property type="project" value="TreeGrafter"/>
</dbReference>
<dbReference type="GO" id="GO:0070180">
    <property type="term" value="F:large ribosomal subunit rRNA binding"/>
    <property type="evidence" value="ECO:0007669"/>
    <property type="project" value="TreeGrafter"/>
</dbReference>
<dbReference type="GO" id="GO:0003735">
    <property type="term" value="F:structural constituent of ribosome"/>
    <property type="evidence" value="ECO:0007669"/>
    <property type="project" value="InterPro"/>
</dbReference>
<dbReference type="GO" id="GO:0006412">
    <property type="term" value="P:translation"/>
    <property type="evidence" value="ECO:0007669"/>
    <property type="project" value="UniProtKB-UniRule"/>
</dbReference>
<dbReference type="CDD" id="cd00337">
    <property type="entry name" value="Ribosomal_uL14"/>
    <property type="match status" value="1"/>
</dbReference>
<dbReference type="FunFam" id="2.40.150.20:FF:000001">
    <property type="entry name" value="50S ribosomal protein L14"/>
    <property type="match status" value="1"/>
</dbReference>
<dbReference type="Gene3D" id="2.40.150.20">
    <property type="entry name" value="Ribosomal protein L14"/>
    <property type="match status" value="1"/>
</dbReference>
<dbReference type="HAMAP" id="MF_01367">
    <property type="entry name" value="Ribosomal_uL14"/>
    <property type="match status" value="1"/>
</dbReference>
<dbReference type="InterPro" id="IPR000218">
    <property type="entry name" value="Ribosomal_uL14"/>
</dbReference>
<dbReference type="InterPro" id="IPR005745">
    <property type="entry name" value="Ribosomal_uL14_bac-type"/>
</dbReference>
<dbReference type="InterPro" id="IPR019972">
    <property type="entry name" value="Ribosomal_uL14_CS"/>
</dbReference>
<dbReference type="InterPro" id="IPR036853">
    <property type="entry name" value="Ribosomal_uL14_sf"/>
</dbReference>
<dbReference type="NCBIfam" id="TIGR01067">
    <property type="entry name" value="rplN_bact"/>
    <property type="match status" value="1"/>
</dbReference>
<dbReference type="PANTHER" id="PTHR11761">
    <property type="entry name" value="50S/60S RIBOSOMAL PROTEIN L14/L23"/>
    <property type="match status" value="1"/>
</dbReference>
<dbReference type="PANTHER" id="PTHR11761:SF3">
    <property type="entry name" value="LARGE RIBOSOMAL SUBUNIT PROTEIN UL14M"/>
    <property type="match status" value="1"/>
</dbReference>
<dbReference type="Pfam" id="PF00238">
    <property type="entry name" value="Ribosomal_L14"/>
    <property type="match status" value="1"/>
</dbReference>
<dbReference type="SMART" id="SM01374">
    <property type="entry name" value="Ribosomal_L14"/>
    <property type="match status" value="1"/>
</dbReference>
<dbReference type="SUPFAM" id="SSF50193">
    <property type="entry name" value="Ribosomal protein L14"/>
    <property type="match status" value="1"/>
</dbReference>
<dbReference type="PROSITE" id="PS00049">
    <property type="entry name" value="RIBOSOMAL_L14"/>
    <property type="match status" value="1"/>
</dbReference>
<organism>
    <name type="scientific">Clostridium botulinum (strain Langeland / NCTC 10281 / Type F)</name>
    <dbReference type="NCBI Taxonomy" id="441772"/>
    <lineage>
        <taxon>Bacteria</taxon>
        <taxon>Bacillati</taxon>
        <taxon>Bacillota</taxon>
        <taxon>Clostridia</taxon>
        <taxon>Eubacteriales</taxon>
        <taxon>Clostridiaceae</taxon>
        <taxon>Clostridium</taxon>
    </lineage>
</organism>
<reference key="1">
    <citation type="submission" date="2007-06" db="EMBL/GenBank/DDBJ databases">
        <authorList>
            <person name="Brinkac L.M."/>
            <person name="Daugherty S."/>
            <person name="Dodson R.J."/>
            <person name="Madupu R."/>
            <person name="Brown J.L."/>
            <person name="Bruce D."/>
            <person name="Detter C."/>
            <person name="Munk C."/>
            <person name="Smith L.A."/>
            <person name="Smith T.J."/>
            <person name="White O."/>
            <person name="Brettin T.S."/>
        </authorList>
    </citation>
    <scope>NUCLEOTIDE SEQUENCE [LARGE SCALE GENOMIC DNA]</scope>
    <source>
        <strain>Langeland / NCTC 10281 / Type F</strain>
    </source>
</reference>
<accession>A7GJ64</accession>
<name>RL14_CLOBL</name>
<proteinExistence type="inferred from homology"/>
<feature type="chain" id="PRO_1000055560" description="Large ribosomal subunit protein uL14">
    <location>
        <begin position="1"/>
        <end position="122"/>
    </location>
</feature>